<proteinExistence type="evidence at protein level"/>
<keyword id="KW-0963">Cytoplasm</keyword>
<keyword id="KW-0903">Direct protein sequencing</keyword>
<keyword id="KW-0507">mRNA processing</keyword>
<keyword id="KW-0508">mRNA splicing</keyword>
<keyword id="KW-0539">Nucleus</keyword>
<keyword id="KW-1185">Reference proteome</keyword>
<keyword id="KW-0687">Ribonucleoprotein</keyword>
<keyword id="KW-0694">RNA-binding</keyword>
<keyword id="KW-0747">Spliceosome</keyword>
<dbReference type="EMBL" id="AK012802">
    <property type="protein sequence ID" value="BAB28480.1"/>
    <property type="molecule type" value="mRNA"/>
</dbReference>
<dbReference type="EMBL" id="AK013235">
    <property type="protein sequence ID" value="BAB28732.1"/>
    <property type="molecule type" value="mRNA"/>
</dbReference>
<dbReference type="EMBL" id="BC027499">
    <property type="protein sequence ID" value="AAH27499.1"/>
    <property type="molecule type" value="mRNA"/>
</dbReference>
<dbReference type="EMBL" id="BC051470">
    <property type="protein sequence ID" value="AAH51470.1"/>
    <property type="molecule type" value="mRNA"/>
</dbReference>
<dbReference type="EMBL" id="BC094411">
    <property type="protein sequence ID" value="AAH94411.1"/>
    <property type="molecule type" value="mRNA"/>
</dbReference>
<dbReference type="CCDS" id="CCDS39541.1"/>
<dbReference type="RefSeq" id="NP_080782.1">
    <property type="nucleotide sequence ID" value="NM_026506.2"/>
</dbReference>
<dbReference type="SMR" id="P62309"/>
<dbReference type="BioGRID" id="212595">
    <property type="interactions" value="21"/>
</dbReference>
<dbReference type="FunCoup" id="P62309">
    <property type="interactions" value="2513"/>
</dbReference>
<dbReference type="IntAct" id="P62309">
    <property type="interactions" value="2"/>
</dbReference>
<dbReference type="STRING" id="10090.ENSMUSP00000086987"/>
<dbReference type="iPTMnet" id="P62309"/>
<dbReference type="PhosphoSitePlus" id="P62309"/>
<dbReference type="SwissPalm" id="P62309"/>
<dbReference type="jPOST" id="P62309"/>
<dbReference type="PaxDb" id="10090-ENSMUSP00000086987"/>
<dbReference type="PeptideAtlas" id="P62309"/>
<dbReference type="ProteomicsDB" id="256665"/>
<dbReference type="Pumba" id="P62309"/>
<dbReference type="DNASU" id="68011"/>
<dbReference type="Ensembl" id="ENSMUST00000089558.7">
    <property type="protein sequence ID" value="ENSMUSP00000086987.6"/>
    <property type="gene ID" value="ENSMUSG00000057278.9"/>
</dbReference>
<dbReference type="GeneID" id="68011"/>
<dbReference type="KEGG" id="mmu:68011"/>
<dbReference type="UCSC" id="uc009crm.1">
    <property type="organism name" value="mouse"/>
</dbReference>
<dbReference type="AGR" id="MGI:1915261"/>
<dbReference type="CTD" id="6637"/>
<dbReference type="MGI" id="MGI:1915261">
    <property type="gene designation" value="Snrpg"/>
</dbReference>
<dbReference type="VEuPathDB" id="HostDB:ENSMUSG00000057278"/>
<dbReference type="eggNOG" id="KOG1780">
    <property type="taxonomic scope" value="Eukaryota"/>
</dbReference>
<dbReference type="GeneTree" id="ENSGT00510000046985"/>
<dbReference type="HOGENOM" id="CLU_076902_10_1_1"/>
<dbReference type="InParanoid" id="P62309"/>
<dbReference type="OMA" id="MSKAQPP"/>
<dbReference type="OrthoDB" id="9557128at2759"/>
<dbReference type="PhylomeDB" id="P62309"/>
<dbReference type="TreeFam" id="TF315099"/>
<dbReference type="Reactome" id="R-MMU-111367">
    <property type="pathway name" value="SLBP independent Processing of Histone Pre-mRNAs"/>
</dbReference>
<dbReference type="Reactome" id="R-MMU-191859">
    <property type="pathway name" value="snRNP Assembly"/>
</dbReference>
<dbReference type="Reactome" id="R-MMU-72163">
    <property type="pathway name" value="mRNA Splicing - Major Pathway"/>
</dbReference>
<dbReference type="Reactome" id="R-MMU-72165">
    <property type="pathway name" value="mRNA Splicing - Minor Pathway"/>
</dbReference>
<dbReference type="Reactome" id="R-MMU-73856">
    <property type="pathway name" value="RNA Polymerase II Transcription Termination"/>
</dbReference>
<dbReference type="Reactome" id="R-MMU-77588">
    <property type="pathway name" value="SLBP Dependent Processing of Replication-Dependent Histone Pre-mRNAs"/>
</dbReference>
<dbReference type="BioGRID-ORCS" id="68011">
    <property type="hits" value="30 hits in 76 CRISPR screens"/>
</dbReference>
<dbReference type="CD-CODE" id="5E82D60E">
    <property type="entry name" value="Nucleolus"/>
</dbReference>
<dbReference type="ChiTaRS" id="Snrpg">
    <property type="organism name" value="mouse"/>
</dbReference>
<dbReference type="EvolutionaryTrace" id="P62309"/>
<dbReference type="PRO" id="PR:P62309"/>
<dbReference type="Proteomes" id="UP000000589">
    <property type="component" value="Chromosome 6"/>
</dbReference>
<dbReference type="RNAct" id="P62309">
    <property type="molecule type" value="protein"/>
</dbReference>
<dbReference type="Bgee" id="ENSMUSG00000057278">
    <property type="expression patterns" value="Expressed in maxillary prominence and 256 other cell types or tissues"/>
</dbReference>
<dbReference type="GO" id="GO:0005829">
    <property type="term" value="C:cytosol"/>
    <property type="evidence" value="ECO:0000250"/>
    <property type="project" value="UniProtKB"/>
</dbReference>
<dbReference type="GO" id="GO:0034709">
    <property type="term" value="C:methylosome"/>
    <property type="evidence" value="ECO:0000250"/>
    <property type="project" value="UniProtKB"/>
</dbReference>
<dbReference type="GO" id="GO:0005654">
    <property type="term" value="C:nucleoplasm"/>
    <property type="evidence" value="ECO:0007669"/>
    <property type="project" value="Ensembl"/>
</dbReference>
<dbReference type="GO" id="GO:0005634">
    <property type="term" value="C:nucleus"/>
    <property type="evidence" value="ECO:0000250"/>
    <property type="project" value="UniProtKB"/>
</dbReference>
<dbReference type="GO" id="GO:0034719">
    <property type="term" value="C:SMN-Sm protein complex"/>
    <property type="evidence" value="ECO:0000250"/>
    <property type="project" value="UniProtKB"/>
</dbReference>
<dbReference type="GO" id="GO:0005685">
    <property type="term" value="C:U1 snRNP"/>
    <property type="evidence" value="ECO:0000250"/>
    <property type="project" value="UniProtKB"/>
</dbReference>
<dbReference type="GO" id="GO:0005689">
    <property type="term" value="C:U12-type spliceosomal complex"/>
    <property type="evidence" value="ECO:0007669"/>
    <property type="project" value="Ensembl"/>
</dbReference>
<dbReference type="GO" id="GO:0071007">
    <property type="term" value="C:U2-type catalytic step 2 spliceosome"/>
    <property type="evidence" value="ECO:0000250"/>
    <property type="project" value="UniProtKB"/>
</dbReference>
<dbReference type="GO" id="GO:0071005">
    <property type="term" value="C:U2-type precatalytic spliceosome"/>
    <property type="evidence" value="ECO:0000250"/>
    <property type="project" value="UniProtKB"/>
</dbReference>
<dbReference type="GO" id="GO:0005684">
    <property type="term" value="C:U2-type spliceosomal complex"/>
    <property type="evidence" value="ECO:0000250"/>
    <property type="project" value="UniProtKB"/>
</dbReference>
<dbReference type="GO" id="GO:0005687">
    <property type="term" value="C:U4 snRNP"/>
    <property type="evidence" value="ECO:0000250"/>
    <property type="project" value="UniProtKB"/>
</dbReference>
<dbReference type="GO" id="GO:0046540">
    <property type="term" value="C:U4/U6 x U5 tri-snRNP complex"/>
    <property type="evidence" value="ECO:0000250"/>
    <property type="project" value="UniProtKB"/>
</dbReference>
<dbReference type="GO" id="GO:0005683">
    <property type="term" value="C:U7 snRNP"/>
    <property type="evidence" value="ECO:0000250"/>
    <property type="project" value="UniProtKB"/>
</dbReference>
<dbReference type="GO" id="GO:0003723">
    <property type="term" value="F:RNA binding"/>
    <property type="evidence" value="ECO:0007669"/>
    <property type="project" value="UniProtKB-KW"/>
</dbReference>
<dbReference type="GO" id="GO:0000398">
    <property type="term" value="P:mRNA splicing, via spliceosome"/>
    <property type="evidence" value="ECO:0000250"/>
    <property type="project" value="UniProtKB"/>
</dbReference>
<dbReference type="GO" id="GO:0000387">
    <property type="term" value="P:spliceosomal snRNP assembly"/>
    <property type="evidence" value="ECO:0000250"/>
    <property type="project" value="UniProtKB"/>
</dbReference>
<dbReference type="CDD" id="cd01719">
    <property type="entry name" value="Sm_G"/>
    <property type="match status" value="1"/>
</dbReference>
<dbReference type="FunFam" id="2.30.30.100:FF:000017">
    <property type="entry name" value="Small nuclear ribonucleoprotein G"/>
    <property type="match status" value="1"/>
</dbReference>
<dbReference type="Gene3D" id="2.30.30.100">
    <property type="match status" value="1"/>
</dbReference>
<dbReference type="InterPro" id="IPR044641">
    <property type="entry name" value="Lsm7/SmG-like"/>
</dbReference>
<dbReference type="InterPro" id="IPR010920">
    <property type="entry name" value="LSM_dom_sf"/>
</dbReference>
<dbReference type="InterPro" id="IPR047575">
    <property type="entry name" value="Sm"/>
</dbReference>
<dbReference type="InterPro" id="IPR001163">
    <property type="entry name" value="Sm_dom_euk/arc"/>
</dbReference>
<dbReference type="InterPro" id="IPR034098">
    <property type="entry name" value="Sm_G"/>
</dbReference>
<dbReference type="PANTHER" id="PTHR10553">
    <property type="entry name" value="SMALL NUCLEAR RIBONUCLEOPROTEIN"/>
    <property type="match status" value="1"/>
</dbReference>
<dbReference type="PANTHER" id="PTHR10553:SF26">
    <property type="entry name" value="SMALL NUCLEAR RIBONUCLEOPROTEIN G-RELATED"/>
    <property type="match status" value="1"/>
</dbReference>
<dbReference type="Pfam" id="PF01423">
    <property type="entry name" value="LSM"/>
    <property type="match status" value="1"/>
</dbReference>
<dbReference type="PIRSF" id="PIRSF037188">
    <property type="entry name" value="U6_snRNA_Lsm7"/>
    <property type="match status" value="1"/>
</dbReference>
<dbReference type="SMART" id="SM00651">
    <property type="entry name" value="Sm"/>
    <property type="match status" value="1"/>
</dbReference>
<dbReference type="SUPFAM" id="SSF50182">
    <property type="entry name" value="Sm-like ribonucleoproteins"/>
    <property type="match status" value="1"/>
</dbReference>
<dbReference type="PROSITE" id="PS52002">
    <property type="entry name" value="SM"/>
    <property type="match status" value="1"/>
</dbReference>
<accession>P62309</accession>
<accession>Q15357</accession>
<accession>Q52KC7</accession>
<comment type="function">
    <text evidence="1">Plays a role in pre-mRNA splicing as a core component of the spliceosomal U1, U2, U4 and U5 small nuclear ribonucleoproteins (snRNPs), the building blocks of the spliceosome. Component of both the pre-catalytic spliceosome B complex and activated spliceosome C complexes. IAs a component of the minor spliceosome, involved in the splicing of U12-type introns in pre-mRNAs. As part of the U7 snRNP it is involved in histone 3'-end processing.</text>
</comment>
<comment type="subunit">
    <text evidence="1">Core component of the spliceosomal U1, U2, U4 and U5 small nuclear ribonucleoproteins (snRNPs), the building blocks of the spliceosome. Most spliceosomal snRNPs contain a common set of Sm proteins, SNRPB, SNRPD1, SNRPD2, SNRPD3, SNRPE, SNRPF and SNRPG that assemble in a heptameric protein ring on the Sm site of the small nuclear RNA to form the core snRNP. Component of the U1 snRNP. The U1 snRNP is composed of the U1 snRNA and the 7 core Sm proteins SNRPB, SNRPD1, SNRPD2, SNRPD3, SNRPE, SNRPF and SNRPG, and at least three U1 snRNP-specific proteins SNRNP70/U1-70K, SNRPA/U1-A and SNRPC/U1-C. Component of the U4/U6-U5 tri-snRNP complex composed of the U4, U6 and U5 snRNAs and at least PRPF3, PRPF4, PRPF6, PRPF8, PRPF31, SNRNP200, TXNL4A, SNRNP40, SNRPB, SNRPD1, SNRPD2, SNRPD3, SNRPE, SNRPF, SNRPG, DDX23, CD2BP2, PPIH, SNU13, EFTUD2, SART1 and USP39, plus LSM2, LSM3, LSM4, LSM5, LSM6, LSM7 and LSM8. Component of the U7 snRNP complex, or U7 Sm protein core complex, that is composed of the U7 snRNA and at least LSM10, LSM11, SNRPB, SNRPD3, SNRPE, SNRPF and SNRPG; the complex does not contain SNRPD1 and SNRPD2. Component of the minor spliceosome, which splices U12-type introns. Part of the SMN-Sm complex that contains SMN1, GEMIN2/SIP1, DDX20/GEMIN3, GEMIN4, GEMIN5, GEMIN6, GEMIN7, GEMIN8, STRAP/UNRIP and the Sm proteins SNRPB, SNRPD1, SNRPD2, SNRPD3, SNRPE, SNRPF and SNRPG; catalyzes core snRNPs assembly. Forms a 6S pICln-Sm complex composed of CLNS1A/pICln, SNRPD1, SNRPD2, SNRPE, SNRPF and SNRPG; ring-like structure where CLNS1A/pICln mimics additional Sm proteins and which is unable to assemble into the core snRNP. Interacts with GEMIN2 (via N-terminus); the interaction is direct. Interacts with SNRPE; the interaction is direct.</text>
</comment>
<comment type="subcellular location">
    <subcellularLocation>
        <location evidence="1">Cytoplasm</location>
        <location evidence="1">Cytosol</location>
    </subcellularLocation>
    <subcellularLocation>
        <location evidence="1">Nucleus</location>
    </subcellularLocation>
    <text evidence="1">SMN-mediated assembly into core snRNPs occurs in the cytosol before SMN-mediated transport to the nucleus to be included in spliceosomes.</text>
</comment>
<comment type="similarity">
    <text evidence="3">Belongs to the snRNP Sm proteins family.</text>
</comment>
<protein>
    <recommendedName>
        <fullName>Small nuclear ribonucleoprotein G</fullName>
        <shortName>snRNP-G</shortName>
    </recommendedName>
    <alternativeName>
        <fullName>Sm protein G</fullName>
        <shortName>Sm-G</shortName>
        <shortName>SmG</shortName>
    </alternativeName>
</protein>
<sequence length="76" mass="8496">MSKAHPPELKKFMDKKLSLKLNGGRHVQGILRGFDPFMNLVIDECVEMATSGQQNNIGMVVIRGNSIIMLEALERV</sequence>
<feature type="chain" id="PRO_0000125546" description="Small nuclear ribonucleoprotein G">
    <location>
        <begin position="1"/>
        <end position="76"/>
    </location>
</feature>
<feature type="domain" description="Sm" evidence="2">
    <location>
        <begin position="4"/>
        <end position="76"/>
    </location>
</feature>
<name>RUXG_MOUSE</name>
<evidence type="ECO:0000250" key="1">
    <source>
        <dbReference type="UniProtKB" id="P62308"/>
    </source>
</evidence>
<evidence type="ECO:0000255" key="2">
    <source>
        <dbReference type="PROSITE-ProRule" id="PRU01346"/>
    </source>
</evidence>
<evidence type="ECO:0000305" key="3"/>
<reference key="1">
    <citation type="journal article" date="2005" name="Science">
        <title>The transcriptional landscape of the mammalian genome.</title>
        <authorList>
            <person name="Carninci P."/>
            <person name="Kasukawa T."/>
            <person name="Katayama S."/>
            <person name="Gough J."/>
            <person name="Frith M.C."/>
            <person name="Maeda N."/>
            <person name="Oyama R."/>
            <person name="Ravasi T."/>
            <person name="Lenhard B."/>
            <person name="Wells C."/>
            <person name="Kodzius R."/>
            <person name="Shimokawa K."/>
            <person name="Bajic V.B."/>
            <person name="Brenner S.E."/>
            <person name="Batalov S."/>
            <person name="Forrest A.R."/>
            <person name="Zavolan M."/>
            <person name="Davis M.J."/>
            <person name="Wilming L.G."/>
            <person name="Aidinis V."/>
            <person name="Allen J.E."/>
            <person name="Ambesi-Impiombato A."/>
            <person name="Apweiler R."/>
            <person name="Aturaliya R.N."/>
            <person name="Bailey T.L."/>
            <person name="Bansal M."/>
            <person name="Baxter L."/>
            <person name="Beisel K.W."/>
            <person name="Bersano T."/>
            <person name="Bono H."/>
            <person name="Chalk A.M."/>
            <person name="Chiu K.P."/>
            <person name="Choudhary V."/>
            <person name="Christoffels A."/>
            <person name="Clutterbuck D.R."/>
            <person name="Crowe M.L."/>
            <person name="Dalla E."/>
            <person name="Dalrymple B.P."/>
            <person name="de Bono B."/>
            <person name="Della Gatta G."/>
            <person name="di Bernardo D."/>
            <person name="Down T."/>
            <person name="Engstrom P."/>
            <person name="Fagiolini M."/>
            <person name="Faulkner G."/>
            <person name="Fletcher C.F."/>
            <person name="Fukushima T."/>
            <person name="Furuno M."/>
            <person name="Futaki S."/>
            <person name="Gariboldi M."/>
            <person name="Georgii-Hemming P."/>
            <person name="Gingeras T.R."/>
            <person name="Gojobori T."/>
            <person name="Green R.E."/>
            <person name="Gustincich S."/>
            <person name="Harbers M."/>
            <person name="Hayashi Y."/>
            <person name="Hensch T.K."/>
            <person name="Hirokawa N."/>
            <person name="Hill D."/>
            <person name="Huminiecki L."/>
            <person name="Iacono M."/>
            <person name="Ikeo K."/>
            <person name="Iwama A."/>
            <person name="Ishikawa T."/>
            <person name="Jakt M."/>
            <person name="Kanapin A."/>
            <person name="Katoh M."/>
            <person name="Kawasawa Y."/>
            <person name="Kelso J."/>
            <person name="Kitamura H."/>
            <person name="Kitano H."/>
            <person name="Kollias G."/>
            <person name="Krishnan S.P."/>
            <person name="Kruger A."/>
            <person name="Kummerfeld S.K."/>
            <person name="Kurochkin I.V."/>
            <person name="Lareau L.F."/>
            <person name="Lazarevic D."/>
            <person name="Lipovich L."/>
            <person name="Liu J."/>
            <person name="Liuni S."/>
            <person name="McWilliam S."/>
            <person name="Madan Babu M."/>
            <person name="Madera M."/>
            <person name="Marchionni L."/>
            <person name="Matsuda H."/>
            <person name="Matsuzawa S."/>
            <person name="Miki H."/>
            <person name="Mignone F."/>
            <person name="Miyake S."/>
            <person name="Morris K."/>
            <person name="Mottagui-Tabar S."/>
            <person name="Mulder N."/>
            <person name="Nakano N."/>
            <person name="Nakauchi H."/>
            <person name="Ng P."/>
            <person name="Nilsson R."/>
            <person name="Nishiguchi S."/>
            <person name="Nishikawa S."/>
            <person name="Nori F."/>
            <person name="Ohara O."/>
            <person name="Okazaki Y."/>
            <person name="Orlando V."/>
            <person name="Pang K.C."/>
            <person name="Pavan W.J."/>
            <person name="Pavesi G."/>
            <person name="Pesole G."/>
            <person name="Petrovsky N."/>
            <person name="Piazza S."/>
            <person name="Reed J."/>
            <person name="Reid J.F."/>
            <person name="Ring B.Z."/>
            <person name="Ringwald M."/>
            <person name="Rost B."/>
            <person name="Ruan Y."/>
            <person name="Salzberg S.L."/>
            <person name="Sandelin A."/>
            <person name="Schneider C."/>
            <person name="Schoenbach C."/>
            <person name="Sekiguchi K."/>
            <person name="Semple C.A."/>
            <person name="Seno S."/>
            <person name="Sessa L."/>
            <person name="Sheng Y."/>
            <person name="Shibata Y."/>
            <person name="Shimada H."/>
            <person name="Shimada K."/>
            <person name="Silva D."/>
            <person name="Sinclair B."/>
            <person name="Sperling S."/>
            <person name="Stupka E."/>
            <person name="Sugiura K."/>
            <person name="Sultana R."/>
            <person name="Takenaka Y."/>
            <person name="Taki K."/>
            <person name="Tammoja K."/>
            <person name="Tan S.L."/>
            <person name="Tang S."/>
            <person name="Taylor M.S."/>
            <person name="Tegner J."/>
            <person name="Teichmann S.A."/>
            <person name="Ueda H.R."/>
            <person name="van Nimwegen E."/>
            <person name="Verardo R."/>
            <person name="Wei C.L."/>
            <person name="Yagi K."/>
            <person name="Yamanishi H."/>
            <person name="Zabarovsky E."/>
            <person name="Zhu S."/>
            <person name="Zimmer A."/>
            <person name="Hide W."/>
            <person name="Bult C."/>
            <person name="Grimmond S.M."/>
            <person name="Teasdale R.D."/>
            <person name="Liu E.T."/>
            <person name="Brusic V."/>
            <person name="Quackenbush J."/>
            <person name="Wahlestedt C."/>
            <person name="Mattick J.S."/>
            <person name="Hume D.A."/>
            <person name="Kai C."/>
            <person name="Sasaki D."/>
            <person name="Tomaru Y."/>
            <person name="Fukuda S."/>
            <person name="Kanamori-Katayama M."/>
            <person name="Suzuki M."/>
            <person name="Aoki J."/>
            <person name="Arakawa T."/>
            <person name="Iida J."/>
            <person name="Imamura K."/>
            <person name="Itoh M."/>
            <person name="Kato T."/>
            <person name="Kawaji H."/>
            <person name="Kawagashira N."/>
            <person name="Kawashima T."/>
            <person name="Kojima M."/>
            <person name="Kondo S."/>
            <person name="Konno H."/>
            <person name="Nakano K."/>
            <person name="Ninomiya N."/>
            <person name="Nishio T."/>
            <person name="Okada M."/>
            <person name="Plessy C."/>
            <person name="Shibata K."/>
            <person name="Shiraki T."/>
            <person name="Suzuki S."/>
            <person name="Tagami M."/>
            <person name="Waki K."/>
            <person name="Watahiki A."/>
            <person name="Okamura-Oho Y."/>
            <person name="Suzuki H."/>
            <person name="Kawai J."/>
            <person name="Hayashizaki Y."/>
        </authorList>
    </citation>
    <scope>NUCLEOTIDE SEQUENCE [LARGE SCALE MRNA]</scope>
    <source>
        <strain>C57BL/6J</strain>
    </source>
</reference>
<reference key="2">
    <citation type="journal article" date="2004" name="Genome Res.">
        <title>The status, quality, and expansion of the NIH full-length cDNA project: the Mammalian Gene Collection (MGC).</title>
        <authorList>
            <consortium name="The MGC Project Team"/>
        </authorList>
    </citation>
    <scope>NUCLEOTIDE SEQUENCE [LARGE SCALE MRNA]</scope>
    <source>
        <strain>C57BL/6J</strain>
        <tissue>Mammary gland</tissue>
        <tissue>Thymus</tissue>
    </source>
</reference>
<reference key="3">
    <citation type="submission" date="2009-01" db="UniProtKB">
        <authorList>
            <person name="Lubec G."/>
            <person name="Sunyer B."/>
            <person name="Chen W.-Q."/>
        </authorList>
    </citation>
    <scope>PROTEIN SEQUENCE OF 1-10</scope>
    <scope>IDENTIFICATION BY MASS SPECTROMETRY</scope>
    <source>
        <strain>OF1</strain>
        <tissue>Hippocampus</tissue>
    </source>
</reference>
<reference key="4">
    <citation type="journal article" date="2010" name="Cell">
        <title>A tissue-specific atlas of mouse protein phosphorylation and expression.</title>
        <authorList>
            <person name="Huttlin E.L."/>
            <person name="Jedrychowski M.P."/>
            <person name="Elias J.E."/>
            <person name="Goswami T."/>
            <person name="Rad R."/>
            <person name="Beausoleil S.A."/>
            <person name="Villen J."/>
            <person name="Haas W."/>
            <person name="Sowa M.E."/>
            <person name="Gygi S.P."/>
        </authorList>
    </citation>
    <scope>IDENTIFICATION BY MASS SPECTROMETRY [LARGE SCALE ANALYSIS]</scope>
    <source>
        <tissue>Brain</tissue>
        <tissue>Lung</tissue>
        <tissue>Spleen</tissue>
        <tissue>Testis</tissue>
    </source>
</reference>
<organism>
    <name type="scientific">Mus musculus</name>
    <name type="common">Mouse</name>
    <dbReference type="NCBI Taxonomy" id="10090"/>
    <lineage>
        <taxon>Eukaryota</taxon>
        <taxon>Metazoa</taxon>
        <taxon>Chordata</taxon>
        <taxon>Craniata</taxon>
        <taxon>Vertebrata</taxon>
        <taxon>Euteleostomi</taxon>
        <taxon>Mammalia</taxon>
        <taxon>Eutheria</taxon>
        <taxon>Euarchontoglires</taxon>
        <taxon>Glires</taxon>
        <taxon>Rodentia</taxon>
        <taxon>Myomorpha</taxon>
        <taxon>Muroidea</taxon>
        <taxon>Muridae</taxon>
        <taxon>Murinae</taxon>
        <taxon>Mus</taxon>
        <taxon>Mus</taxon>
    </lineage>
</organism>
<gene>
    <name type="primary">Snrpg</name>
</gene>